<reference key="1">
    <citation type="journal article" date="1988" name="Mol. Cell. Biol.">
        <title>Structural and functional conservation between yeast and human 3-hydroxy-3-methylglutaryl coenzyme A reductases, the rate-limiting enzyme of sterol biosynthesis.</title>
        <authorList>
            <person name="Basson M.E."/>
            <person name="Thorsness M."/>
            <person name="Finer-Moore J."/>
            <person name="Stroud R.M."/>
            <person name="Rine J."/>
        </authorList>
    </citation>
    <scope>NUCLEOTIDE SEQUENCE [GENOMIC DNA]</scope>
    <scope>FUNCTION</scope>
    <scope>PATHWAY</scope>
</reference>
<reference key="2">
    <citation type="journal article" date="1997" name="Nature">
        <title>The nucleotide sequence of Saccharomyces cerevisiae chromosome XII.</title>
        <authorList>
            <person name="Johnston M."/>
            <person name="Hillier L.W."/>
            <person name="Riles L."/>
            <person name="Albermann K."/>
            <person name="Andre B."/>
            <person name="Ansorge W."/>
            <person name="Benes V."/>
            <person name="Brueckner M."/>
            <person name="Delius H."/>
            <person name="Dubois E."/>
            <person name="Duesterhoeft A."/>
            <person name="Entian K.-D."/>
            <person name="Floeth M."/>
            <person name="Goffeau A."/>
            <person name="Hebling U."/>
            <person name="Heumann K."/>
            <person name="Heuss-Neitzel D."/>
            <person name="Hilbert H."/>
            <person name="Hilger F."/>
            <person name="Kleine K."/>
            <person name="Koetter P."/>
            <person name="Louis E.J."/>
            <person name="Messenguy F."/>
            <person name="Mewes H.-W."/>
            <person name="Miosga T."/>
            <person name="Moestl D."/>
            <person name="Mueller-Auer S."/>
            <person name="Nentwich U."/>
            <person name="Obermaier B."/>
            <person name="Piravandi E."/>
            <person name="Pohl T.M."/>
            <person name="Portetelle D."/>
            <person name="Purnelle B."/>
            <person name="Rechmann S."/>
            <person name="Rieger M."/>
            <person name="Rinke M."/>
            <person name="Rose M."/>
            <person name="Scharfe M."/>
            <person name="Scherens B."/>
            <person name="Scholler P."/>
            <person name="Schwager C."/>
            <person name="Schwarz S."/>
            <person name="Underwood A.P."/>
            <person name="Urrestarazu L.A."/>
            <person name="Vandenbol M."/>
            <person name="Verhasselt P."/>
            <person name="Vierendeels F."/>
            <person name="Voet M."/>
            <person name="Volckaert G."/>
            <person name="Voss H."/>
            <person name="Wambutt R."/>
            <person name="Wedler E."/>
            <person name="Wedler H."/>
            <person name="Zimmermann F.K."/>
            <person name="Zollner A."/>
            <person name="Hani J."/>
            <person name="Hoheisel J.D."/>
        </authorList>
    </citation>
    <scope>NUCLEOTIDE SEQUENCE [LARGE SCALE GENOMIC DNA]</scope>
    <source>
        <strain>ATCC 204508 / S288c</strain>
    </source>
</reference>
<reference key="3">
    <citation type="journal article" date="2014" name="G3 (Bethesda)">
        <title>The reference genome sequence of Saccharomyces cerevisiae: Then and now.</title>
        <authorList>
            <person name="Engel S.R."/>
            <person name="Dietrich F.S."/>
            <person name="Fisk D.G."/>
            <person name="Binkley G."/>
            <person name="Balakrishnan R."/>
            <person name="Costanzo M.C."/>
            <person name="Dwight S.S."/>
            <person name="Hitz B.C."/>
            <person name="Karra K."/>
            <person name="Nash R.S."/>
            <person name="Weng S."/>
            <person name="Wong E.D."/>
            <person name="Lloyd P."/>
            <person name="Skrzypek M.S."/>
            <person name="Miyasato S.R."/>
            <person name="Simison M."/>
            <person name="Cherry J.M."/>
        </authorList>
    </citation>
    <scope>GENOME REANNOTATION</scope>
    <source>
        <strain>ATCC 204508 / S288c</strain>
    </source>
</reference>
<reference key="4">
    <citation type="journal article" date="2007" name="Genome Res.">
        <title>Approaching a complete repository of sequence-verified protein-encoding clones for Saccharomyces cerevisiae.</title>
        <authorList>
            <person name="Hu Y."/>
            <person name="Rolfs A."/>
            <person name="Bhullar B."/>
            <person name="Murthy T.V.S."/>
            <person name="Zhu C."/>
            <person name="Berger M.F."/>
            <person name="Camargo A.A."/>
            <person name="Kelley F."/>
            <person name="McCarron S."/>
            <person name="Jepson D."/>
            <person name="Richardson A."/>
            <person name="Raphael J."/>
            <person name="Moreira D."/>
            <person name="Taycher E."/>
            <person name="Zuo D."/>
            <person name="Mohr S."/>
            <person name="Kane M.F."/>
            <person name="Williamson J."/>
            <person name="Simpson A.J.G."/>
            <person name="Bulyk M.L."/>
            <person name="Harlow E."/>
            <person name="Marsischky G."/>
            <person name="Kolodner R.D."/>
            <person name="LaBaer J."/>
        </authorList>
    </citation>
    <scope>NUCLEOTIDE SEQUENCE [GENOMIC DNA]</scope>
    <source>
        <strain>ATCC 204508 / S288c</strain>
    </source>
</reference>
<reference key="5">
    <citation type="journal article" date="1986" name="Proc. Natl. Acad. Sci. U.S.A.">
        <title>Saccharomyces cerevisiae contains two functional genes encoding 3-hydroxy-3-methylglutaryl-coenzyme A reductase.</title>
        <authorList>
            <person name="Basson M.E."/>
            <person name="Thorsness M."/>
            <person name="Rine J."/>
        </authorList>
    </citation>
    <scope>NUCLEOTIDE SEQUENCE [GENOMIC DNA] OF 772-961</scope>
    <scope>FUNCTION</scope>
    <scope>CATALYTIC ACTIVITY</scope>
    <scope>DISRUPTION PHENOTYPE</scope>
    <scope>PATHWAY</scope>
</reference>
<reference key="6">
    <citation type="journal article" date="1996" name="Mol. Biol. Cell">
        <title>Different subcellular localization of Saccharomyces cerevisiae HMG-CoA reductase isozymes at elevated levels corresponds to distinct endoplasmic reticulum membrane proliferations.</title>
        <authorList>
            <person name="Koning A.J."/>
            <person name="Roberts C.J."/>
            <person name="Wright R.L."/>
        </authorList>
    </citation>
    <scope>SUBCELLULAR LOCATION</scope>
</reference>
<reference key="7">
    <citation type="journal article" date="2003" name="Nature">
        <title>Global analysis of protein localization in budding yeast.</title>
        <authorList>
            <person name="Huh W.-K."/>
            <person name="Falvo J.V."/>
            <person name="Gerke L.C."/>
            <person name="Carroll A.S."/>
            <person name="Howson R.W."/>
            <person name="Weissman J.S."/>
            <person name="O'Shea E.K."/>
        </authorList>
    </citation>
    <scope>SUBCELLULAR LOCATION [LARGE SCALE ANALYSIS]</scope>
</reference>
<reference key="8">
    <citation type="journal article" date="2003" name="Nature">
        <title>Global analysis of protein expression in yeast.</title>
        <authorList>
            <person name="Ghaemmaghami S."/>
            <person name="Huh W.-K."/>
            <person name="Bower K."/>
            <person name="Howson R.W."/>
            <person name="Belle A."/>
            <person name="Dephoure N."/>
            <person name="O'Shea E.K."/>
            <person name="Weissman J.S."/>
        </authorList>
    </citation>
    <scope>LEVEL OF PROTEIN EXPRESSION [LARGE SCALE ANALYSIS]</scope>
</reference>
<reference key="9">
    <citation type="journal article" date="2006" name="Proc. Natl. Acad. Sci. U.S.A.">
        <title>A global topology map of the Saccharomyces cerevisiae membrane proteome.</title>
        <authorList>
            <person name="Kim H."/>
            <person name="Melen K."/>
            <person name="Oesterberg M."/>
            <person name="von Heijne G."/>
        </authorList>
    </citation>
    <scope>TOPOLOGY [LARGE SCALE ANALYSIS]</scope>
    <source>
        <strain>ATCC 208353 / W303-1A</strain>
    </source>
</reference>
<reference key="10">
    <citation type="journal article" date="2007" name="J. Proteome Res.">
        <title>Large-scale phosphorylation analysis of alpha-factor-arrested Saccharomyces cerevisiae.</title>
        <authorList>
            <person name="Li X."/>
            <person name="Gerber S.A."/>
            <person name="Rudner A.D."/>
            <person name="Beausoleil S.A."/>
            <person name="Haas W."/>
            <person name="Villen J."/>
            <person name="Elias J.E."/>
            <person name="Gygi S.P."/>
        </authorList>
    </citation>
    <scope>PHOSPHORYLATION [LARGE SCALE ANALYSIS] AT THR-565</scope>
    <scope>IDENTIFICATION BY MASS SPECTROMETRY [LARGE SCALE ANALYSIS]</scope>
    <source>
        <strain>ADR376</strain>
    </source>
</reference>
<reference key="11">
    <citation type="journal article" date="2008" name="Mol. Cell. Proteomics">
        <title>A multidimensional chromatography technology for in-depth phosphoproteome analysis.</title>
        <authorList>
            <person name="Albuquerque C.P."/>
            <person name="Smolka M.B."/>
            <person name="Payne S.H."/>
            <person name="Bafna V."/>
            <person name="Eng J."/>
            <person name="Zhou H."/>
        </authorList>
    </citation>
    <scope>PHOSPHORYLATION [LARGE SCALE ANALYSIS] AT THR-565</scope>
    <scope>IDENTIFICATION BY MASS SPECTROMETRY [LARGE SCALE ANALYSIS]</scope>
</reference>
<reference key="12">
    <citation type="journal article" date="2011" name="J. Biol. Chem.">
        <title>The sterol-sensing domain (SSD) directly mediates signal-regulated endoplasmic reticulum-associated degradation (ERAD) of 3-hydroxy-3-methylglutaryl (HMG)-CoA reductase isozyme Hmg2.</title>
        <authorList>
            <person name="Theesfeld C.L."/>
            <person name="Pourmand D."/>
            <person name="Davis T."/>
            <person name="Garza R.M."/>
            <person name="Hampton R.Y."/>
        </authorList>
    </citation>
    <scope>DOMAIN</scope>
    <scope>ENZYME STABILITY</scope>
    <scope>MUTAGENESIS OF ASP-188; ILE-191; ILE-192; 202-THR--CYS-205; SER-215; PHE-217; LEU-219; LEU-231; PRO-256; PHE-257; ILE-262; LEU-328; ASP-342; LEU-345; TYR-350; LEU-354 AND GLU-359</scope>
</reference>
<reference key="13">
    <citation type="journal article" date="2020" name="Genes (Basel)">
        <title>Regulation of ergosterol biosynthesis in Saccharomyces cerevisiae.</title>
        <authorList>
            <person name="Jorda T."/>
            <person name="Puig S."/>
        </authorList>
    </citation>
    <scope>REVIEW ON ERGOSTEROL BIOSYNTHESIS</scope>
</reference>
<feature type="chain" id="PRO_0000114457" description="3-hydroxy-3-methylglutaryl-coenzyme A reductase 2">
    <location>
        <begin position="1"/>
        <end position="1045"/>
    </location>
</feature>
<feature type="topological domain" description="Cytoplasmic" evidence="8">
    <location>
        <begin position="1"/>
        <end position="24"/>
    </location>
</feature>
<feature type="transmembrane region" description="Helical" evidence="2">
    <location>
        <begin position="25"/>
        <end position="45"/>
    </location>
</feature>
<feature type="topological domain" description="Lumenal" evidence="8">
    <location>
        <begin position="46"/>
        <end position="186"/>
    </location>
</feature>
<feature type="transmembrane region" description="Helical" evidence="2">
    <location>
        <begin position="187"/>
        <end position="207"/>
    </location>
</feature>
<feature type="topological domain" description="Cytoplasmic" evidence="8">
    <location>
        <begin position="208"/>
        <end position="216"/>
    </location>
</feature>
<feature type="transmembrane region" description="Helical" evidence="2">
    <location>
        <begin position="217"/>
        <end position="237"/>
    </location>
</feature>
<feature type="topological domain" description="Lumenal" evidence="8">
    <location>
        <begin position="238"/>
        <end position="243"/>
    </location>
</feature>
<feature type="transmembrane region" description="Helical" evidence="2">
    <location>
        <begin position="244"/>
        <end position="264"/>
    </location>
</feature>
<feature type="topological domain" description="Cytoplasmic" evidence="8">
    <location>
        <begin position="265"/>
        <end position="301"/>
    </location>
</feature>
<feature type="transmembrane region" description="Helical" evidence="2">
    <location>
        <begin position="302"/>
        <end position="322"/>
    </location>
</feature>
<feature type="topological domain" description="Lumenal" evidence="8">
    <location>
        <begin position="323"/>
        <end position="324"/>
    </location>
</feature>
<feature type="transmembrane region" description="Helical" evidence="2">
    <location>
        <begin position="325"/>
        <end position="345"/>
    </location>
</feature>
<feature type="topological domain" description="Cytoplasmic" evidence="8">
    <location>
        <begin position="346"/>
        <end position="402"/>
    </location>
</feature>
<feature type="transmembrane region" description="Helical" evidence="2">
    <location>
        <begin position="403"/>
        <end position="423"/>
    </location>
</feature>
<feature type="topological domain" description="Lumenal" evidence="8">
    <location>
        <begin position="424"/>
        <end position="497"/>
    </location>
</feature>
<feature type="transmembrane region" description="Helical" evidence="2">
    <location>
        <begin position="498"/>
        <end position="518"/>
    </location>
</feature>
<feature type="topological domain" description="Cytoplasmic" evidence="8">
    <location>
        <begin position="519"/>
        <end position="1045"/>
    </location>
</feature>
<feature type="domain" description="SSD" evidence="3">
    <location>
        <begin position="188"/>
        <end position="356"/>
    </location>
</feature>
<feature type="region of interest" description="Disordered" evidence="5">
    <location>
        <begin position="1018"/>
        <end position="1045"/>
    </location>
</feature>
<feature type="active site" description="Charge relay system" evidence="1">
    <location>
        <position position="710"/>
    </location>
</feature>
<feature type="active site" description="Charge relay system" evidence="1">
    <location>
        <position position="844"/>
    </location>
</feature>
<feature type="active site" description="Charge relay system" evidence="1">
    <location>
        <position position="920"/>
    </location>
</feature>
<feature type="active site" description="Proton donor" evidence="4">
    <location>
        <position position="1016"/>
    </location>
</feature>
<feature type="binding site" evidence="1">
    <location>
        <begin position="716"/>
        <end position="722"/>
    </location>
    <ligand>
        <name>CoA</name>
        <dbReference type="ChEBI" id="CHEBI:57287"/>
    </ligand>
</feature>
<feature type="binding site" evidence="1">
    <location>
        <begin position="777"/>
        <end position="779"/>
    </location>
    <ligand>
        <name>NADP(+)</name>
        <dbReference type="ChEBI" id="CHEBI:58349"/>
    </ligand>
</feature>
<feature type="binding site" evidence="1">
    <location>
        <begin position="804"/>
        <end position="812"/>
    </location>
    <ligand>
        <name>NADP(+)</name>
        <dbReference type="ChEBI" id="CHEBI:58349"/>
    </ligand>
</feature>
<feature type="binding site" evidence="1">
    <location>
        <begin position="873"/>
        <end position="875"/>
    </location>
    <ligand>
        <name>CoA</name>
        <dbReference type="ChEBI" id="CHEBI:57287"/>
    </ligand>
</feature>
<feature type="binding site" evidence="1">
    <location>
        <begin position="1015"/>
        <end position="1016"/>
    </location>
    <ligand>
        <name>CoA</name>
        <dbReference type="ChEBI" id="CHEBI:57287"/>
    </ligand>
</feature>
<feature type="binding site" evidence="1">
    <location>
        <begin position="1020"/>
        <end position="1021"/>
    </location>
    <ligand>
        <name>NADP(+)</name>
        <dbReference type="ChEBI" id="CHEBI:58349"/>
    </ligand>
</feature>
<feature type="modified residue" description="Phosphothreonine" evidence="16 17">
    <location>
        <position position="565"/>
    </location>
</feature>
<feature type="glycosylation site" description="N-linked (GlcNAc...) asparagine" evidence="2">
    <location>
        <position position="115"/>
    </location>
</feature>
<feature type="glycosylation site" description="N-linked (GlcNAc...) asparagine" evidence="2">
    <location>
        <position position="150"/>
    </location>
</feature>
<feature type="glycosylation site" description="N-linked (GlcNAc...) asparagine" evidence="2">
    <location>
        <position position="158"/>
    </location>
</feature>
<feature type="glycosylation site" description="N-linked (GlcNAc...) asparagine" evidence="2">
    <location>
        <position position="179"/>
    </location>
</feature>
<feature type="glycosylation site" description="N-linked (GlcNAc...) asparagine" evidence="2">
    <location>
        <position position="428"/>
    </location>
</feature>
<feature type="glycosylation site" description="N-linked (GlcNAc...) asparagine" evidence="2">
    <location>
        <position position="455"/>
    </location>
</feature>
<feature type="mutagenesis site" description="Leads to increased stability and reduced response to degradation signals." evidence="9">
    <original>D</original>
    <variation>A</variation>
    <location>
        <position position="188"/>
    </location>
</feature>
<feature type="mutagenesis site" description="Leads to normal response to the FPP-derived signal but no response to the oxysterol signal." evidence="9">
    <original>I</original>
    <variation>A</variation>
    <location>
        <position position="191"/>
    </location>
</feature>
<feature type="mutagenesis site" description="Leads to increased stability and reduced response to degradation signals." evidence="9">
    <original>I</original>
    <variation>A</variation>
    <location>
        <position position="192"/>
    </location>
</feature>
<feature type="mutagenesis site" description="Leads to increased stability and reduced response to degradation signals." evidence="9">
    <original>TLCC</original>
    <variation>AAAA</variation>
    <location>
        <begin position="202"/>
        <end position="205"/>
    </location>
</feature>
<feature type="mutagenesis site" description="Leads to increased stability and reduced response to degradation signals." evidence="9">
    <original>S</original>
    <variation>A</variation>
    <variation>T</variation>
    <location>
        <position position="215"/>
    </location>
</feature>
<feature type="mutagenesis site" description="Leads to increased stability and reduced response to degradation signals." evidence="9">
    <original>F</original>
    <variation>L</variation>
    <location>
        <position position="217"/>
    </location>
</feature>
<feature type="mutagenesis site" description="Leads to increased stability and reduced response to degradation signals." evidence="9">
    <original>L</original>
    <variation>F</variation>
    <location>
        <position position="219"/>
    </location>
</feature>
<feature type="mutagenesis site" description="Leads to normal response to the FPP-derived signal but no response to the oxysterol signal." evidence="9">
    <original>L</original>
    <variation>A</variation>
    <location>
        <position position="231"/>
    </location>
</feature>
<feature type="mutagenesis site" description="Leads to normal response to the FPP-derived signal but no response to the oxysterol signal." evidence="9">
    <original>P</original>
    <variation>A</variation>
    <location>
        <position position="256"/>
    </location>
</feature>
<feature type="mutagenesis site" description="Leads to normal response to the FPP-derived signal but no response to the oxysterol signal." evidence="9">
    <original>F</original>
    <variation>L</variation>
    <location>
        <position position="257"/>
    </location>
</feature>
<feature type="mutagenesis site" description="Leads to increased stability and reduced response to degradation signals." evidence="9">
    <original>I</original>
    <variation>A</variation>
    <location>
        <position position="262"/>
    </location>
</feature>
<feature type="mutagenesis site" description="Leads to normal response to the FPP-derived signal but no response to the oxysterol signal." evidence="9">
    <original>L</original>
    <variation>A</variation>
    <location>
        <position position="328"/>
    </location>
</feature>
<feature type="mutagenesis site" description="Leads to increased stability and reduced response to degradation signals." evidence="9">
    <original>D</original>
    <variation>A</variation>
    <location>
        <position position="342"/>
    </location>
</feature>
<feature type="mutagenesis site" description="Leads to normal response to the FPP-derived signal but no response to the oxysterol signal." evidence="9">
    <original>L</original>
    <variation>A</variation>
    <location>
        <position position="345"/>
    </location>
</feature>
<feature type="mutagenesis site" description="Leads to increased stability and reduced response to degradation signals." evidence="9">
    <original>Y</original>
    <variation>A</variation>
    <location>
        <position position="350"/>
    </location>
</feature>
<feature type="mutagenesis site" description="Leads to increased stability and reduced response to degradation signals." evidence="9">
    <original>L</original>
    <variation>A</variation>
    <location>
        <position position="354"/>
    </location>
</feature>
<feature type="mutagenesis site" description="Leads to increased stability and reduced response to degradation signals." evidence="9">
    <original>E</original>
    <variation>A</variation>
    <location>
        <position position="359"/>
    </location>
</feature>
<feature type="sequence conflict" description="In Ref. 4; AAT92819." evidence="15" ref="4">
    <original>V</original>
    <variation>A</variation>
    <location>
        <position position="29"/>
    </location>
</feature>
<comment type="function">
    <text evidence="10 11 13">HMG-CoA reductase; part of the first module of ergosterol biosynthesis pathway constitutes by the early steps of the pathway, conserved across all eukaryotes, and which results in the formation of mevalonate from acetyl-coenzyme A (acetyl-CoA) (PubMed:3065625, PubMed:3526336). HMG1 and HMG2 catalyze the reduction of hydroxymethylglutaryl-CoA (HMG-CoA) to mevalonate that is the rate-limiting step within the first mosule (PubMed:3526336). The first module starts with the action of the cytosolic acetyl-CoA acetyltransferase ERG10 that catalyzes the formation of acetoacetyl-CoA. The hydroxymethylglutaryl-CoA synthase ERG13 then condenses acetyl-CoA with acetoacetyl-CoA to form HMG-CoA. The rate-limiting step of the early module is the reduction to mevalonate by the 3-hydroxy-3-methylglutaryl-coenzyme A (HMG-CoA) reductases HMG1 and HMG2 which are derived from a single ancestral HMGR gene by gene duplication (PubMed:32679672).</text>
</comment>
<comment type="catalytic activity">
    <reaction evidence="4 11">
        <text>(R)-mevalonate + 2 NADP(+) + CoA = (3S)-3-hydroxy-3-methylglutaryl-CoA + 2 NADPH + 2 H(+)</text>
        <dbReference type="Rhea" id="RHEA:15989"/>
        <dbReference type="ChEBI" id="CHEBI:15378"/>
        <dbReference type="ChEBI" id="CHEBI:36464"/>
        <dbReference type="ChEBI" id="CHEBI:43074"/>
        <dbReference type="ChEBI" id="CHEBI:57287"/>
        <dbReference type="ChEBI" id="CHEBI:57783"/>
        <dbReference type="ChEBI" id="CHEBI:58349"/>
        <dbReference type="EC" id="1.1.1.34"/>
    </reaction>
    <physiologicalReaction direction="right-to-left" evidence="11">
        <dbReference type="Rhea" id="RHEA:15991"/>
    </physiologicalReaction>
</comment>
<comment type="pathway">
    <text evidence="10 11">Metabolic intermediate biosynthesis; (R)-mevalonate biosynthesis; (R)-mevalonate from acetyl-CoA: step 3/3.</text>
</comment>
<comment type="interaction">
    <interactant intactId="EBI-8384">
        <id>P12684</id>
    </interactant>
    <interactant intactId="EBI-8377">
        <id>P12683</id>
        <label>HMG1</label>
    </interactant>
    <organismsDiffer>false</organismsDiffer>
    <experiments>6</experiments>
</comment>
<comment type="interaction">
    <interactant intactId="EBI-8384">
        <id>P12684</id>
    </interactant>
    <interactant intactId="EBI-24733">
        <id>P38837</id>
        <label>NSG1</label>
    </interactant>
    <organismsDiffer>false</organismsDiffer>
    <experiments>3</experiments>
</comment>
<comment type="subcellular location">
    <subcellularLocation>
        <location evidence="6 12">Endoplasmic reticulum membrane</location>
        <topology evidence="2">Multi-pass membrane protein</topology>
    </subcellularLocation>
    <subcellularLocation>
        <location evidence="6">Nucleus envelope</location>
    </subcellularLocation>
</comment>
<comment type="domain">
    <text evidence="9">The sterol-sensing domain (SSD) is required for sterol pathway signals to stimulate hmg2 ER-associated degradation and detects both geranylgeranyl pyrophosphate and a secondary oxysterol signal.</text>
</comment>
<comment type="disruption phenotype">
    <text evidence="11">When both HMG1 and HMG2 are deleted, cells are unable to undergo spore germination and vegetative growth.</text>
</comment>
<comment type="miscellaneous">
    <text evidence="7">Present with 149 molecules/cell in log phase SD medium.</text>
</comment>
<comment type="similarity">
    <text evidence="15">Belongs to the HMG-CoA reductase family.</text>
</comment>
<sequence length="1045" mass="115692">MSLPLKTIVHLVKPFACTARFSARYPIHVIVVAVLLSAAAYLSVTQSYLNEWKLDSNQYSTYLSIKPDELFEKCTHYYRSPVSDTWKLLSSKEAADIYTPFHYYLSTISFQSKDNSTTLPSLDDVIYSVDHTRYLLSEEPKIPTELVSENGTKWRLRNNSNFILDLHNIYRNMVKQFSNKTSEFDQFDLFIILAAYLTLFYTLCCLFNDMRKIGSKFWLSFSALSNSACALYLSLYTTHSLLKKPASLLSLVIGLPFIVVIIGFKHKVRLAAFSLQKFHRISIDKKITVSNIIYEAMFQEGAYLIRDYLFYISSFIGCAIYARHLPGLVNFCILSTFMLVFDLLLSATFYSAILSMKLEINIIHRSTVIRQTLEEDGVVPTTADIIYKDETASEPHFLRSNVAIILGKASVIGLLLLINLYVFTDKLNATILNTVYFDSTIYSLPNFINYKDIGNLSNQVIISVLPKQYYTPLKKYHQIEDSVLLIIDSVSNAIRDQFISKLLFFAFAVSISINVYLLNAAKIHTGYMNFQPQSNKIDDLVVQQKSATIEFSETRSMPASSGLETPVTAKDIIISEEIQNNECVYALSSQDEPIRPLSNLVELMEKEQLKNMNNTEVSNLVVNGKLPLYSLEKKLEDTTRAVLVRRKALSTLAESPILVSEKLPFRNYDYDRVFGACCENVIGYMPIPVGVIGPLIIDGTSYHIPMATTEGCLVASAMRGCKAINAGGGATTVLTKDGMTRGPVVRFPTLIRSGACKIWLDSEEGQNSIKKAFNSTSRFARLQHIQTCLAGDLLFMRFRTTTGDAMGMNMISKGVEYSLKQMVEEYGWEDMEVVSVSGNYCTDKKPAAINWIEGRGKSVVAEATIPGDVVKSVLKSDVSALVELNISKNLVGSAMAGSVGGFNAHAANLVTALFLALGQDPAQNVESSNCITLMKEVDGDLRISVSMPSIEVGTIGGGTVLEPQGAMLDLLGVRGPHPTEPGANARQLARIIACAVLAGELSLCSALAAGHLVQSHMTHNRKTNKANELPQPSNKGPPCKTSALL</sequence>
<name>HMDH2_YEAST</name>
<accession>P12684</accession>
<accession>D6VZ84</accession>
<accession>E9P8X3</accession>
<proteinExistence type="evidence at protein level"/>
<organism>
    <name type="scientific">Saccharomyces cerevisiae (strain ATCC 204508 / S288c)</name>
    <name type="common">Baker's yeast</name>
    <dbReference type="NCBI Taxonomy" id="559292"/>
    <lineage>
        <taxon>Eukaryota</taxon>
        <taxon>Fungi</taxon>
        <taxon>Dikarya</taxon>
        <taxon>Ascomycota</taxon>
        <taxon>Saccharomycotina</taxon>
        <taxon>Saccharomycetes</taxon>
        <taxon>Saccharomycetales</taxon>
        <taxon>Saccharomycetaceae</taxon>
        <taxon>Saccharomyces</taxon>
    </lineage>
</organism>
<gene>
    <name evidence="14" type="primary">HMG2</name>
    <name type="ordered locus">YLR450W</name>
    <name type="ORF">L9324.2</name>
</gene>
<evidence type="ECO:0000250" key="1">
    <source>
        <dbReference type="UniProtKB" id="P04035"/>
    </source>
</evidence>
<evidence type="ECO:0000255" key="2"/>
<evidence type="ECO:0000255" key="3">
    <source>
        <dbReference type="PROSITE-ProRule" id="PRU00199"/>
    </source>
</evidence>
<evidence type="ECO:0000255" key="4">
    <source>
        <dbReference type="PROSITE-ProRule" id="PRU10003"/>
    </source>
</evidence>
<evidence type="ECO:0000256" key="5">
    <source>
        <dbReference type="SAM" id="MobiDB-lite"/>
    </source>
</evidence>
<evidence type="ECO:0000269" key="6">
    <source>
    </source>
</evidence>
<evidence type="ECO:0000269" key="7">
    <source>
    </source>
</evidence>
<evidence type="ECO:0000269" key="8">
    <source>
    </source>
</evidence>
<evidence type="ECO:0000269" key="9">
    <source>
    </source>
</evidence>
<evidence type="ECO:0000269" key="10">
    <source>
    </source>
</evidence>
<evidence type="ECO:0000269" key="11">
    <source>
    </source>
</evidence>
<evidence type="ECO:0000269" key="12">
    <source>
    </source>
</evidence>
<evidence type="ECO:0000303" key="13">
    <source>
    </source>
</evidence>
<evidence type="ECO:0000303" key="14">
    <source>
    </source>
</evidence>
<evidence type="ECO:0000305" key="15"/>
<evidence type="ECO:0007744" key="16">
    <source>
    </source>
</evidence>
<evidence type="ECO:0007744" key="17">
    <source>
    </source>
</evidence>
<protein>
    <recommendedName>
        <fullName evidence="14">3-hydroxy-3-methylglutaryl-coenzyme A reductase 2</fullName>
        <shortName evidence="14">HMG-CoA reductase 2</shortName>
        <ecNumber evidence="11">1.1.1.34</ecNumber>
    </recommendedName>
</protein>
<dbReference type="EC" id="1.1.1.34" evidence="11"/>
<dbReference type="EMBL" id="M22255">
    <property type="protein sequence ID" value="AAA34677.1"/>
    <property type="molecule type" value="Genomic_DNA"/>
</dbReference>
<dbReference type="EMBL" id="U22382">
    <property type="protein sequence ID" value="AAB67527.1"/>
    <property type="molecule type" value="Genomic_DNA"/>
</dbReference>
<dbReference type="EMBL" id="AY692800">
    <property type="protein sequence ID" value="AAT92819.1"/>
    <property type="molecule type" value="Genomic_DNA"/>
</dbReference>
<dbReference type="EMBL" id="BK006945">
    <property type="protein sequence ID" value="DAA09750.1"/>
    <property type="molecule type" value="Genomic_DNA"/>
</dbReference>
<dbReference type="PIR" id="B30239">
    <property type="entry name" value="B30239"/>
</dbReference>
<dbReference type="RefSeq" id="NP_013555.1">
    <property type="nucleotide sequence ID" value="NM_001182338.1"/>
</dbReference>
<dbReference type="SMR" id="P12684"/>
<dbReference type="BioGRID" id="31708">
    <property type="interactions" value="167"/>
</dbReference>
<dbReference type="DIP" id="DIP-6277N"/>
<dbReference type="FunCoup" id="P12684">
    <property type="interactions" value="235"/>
</dbReference>
<dbReference type="IntAct" id="P12684">
    <property type="interactions" value="58"/>
</dbReference>
<dbReference type="MINT" id="P12684"/>
<dbReference type="STRING" id="4932.YLR450W"/>
<dbReference type="GlyCosmos" id="P12684">
    <property type="glycosylation" value="6 sites, No reported glycans"/>
</dbReference>
<dbReference type="GlyGen" id="P12684">
    <property type="glycosylation" value="7 sites"/>
</dbReference>
<dbReference type="iPTMnet" id="P12684"/>
<dbReference type="PaxDb" id="4932-YLR450W"/>
<dbReference type="PeptideAtlas" id="P12684"/>
<dbReference type="EnsemblFungi" id="YLR450W_mRNA">
    <property type="protein sequence ID" value="YLR450W"/>
    <property type="gene ID" value="YLR450W"/>
</dbReference>
<dbReference type="GeneID" id="851171"/>
<dbReference type="KEGG" id="sce:YLR450W"/>
<dbReference type="AGR" id="SGD:S000004442"/>
<dbReference type="SGD" id="S000004442">
    <property type="gene designation" value="HMG2"/>
</dbReference>
<dbReference type="VEuPathDB" id="FungiDB:YLR450W"/>
<dbReference type="eggNOG" id="KOG2480">
    <property type="taxonomic scope" value="Eukaryota"/>
</dbReference>
<dbReference type="GeneTree" id="ENSGT00940000155305"/>
<dbReference type="HOGENOM" id="CLU_001734_0_0_1"/>
<dbReference type="InParanoid" id="P12684"/>
<dbReference type="OMA" id="AGPMMID"/>
<dbReference type="OrthoDB" id="310654at2759"/>
<dbReference type="BioCyc" id="MetaCyc:YLR450W-MONOMER"/>
<dbReference type="BioCyc" id="YEAST:YLR450W-MONOMER"/>
<dbReference type="UniPathway" id="UPA00058">
    <property type="reaction ID" value="UER00103"/>
</dbReference>
<dbReference type="BioGRID-ORCS" id="851171">
    <property type="hits" value="0 hits in 10 CRISPR screens"/>
</dbReference>
<dbReference type="PRO" id="PR:P12684"/>
<dbReference type="Proteomes" id="UP000002311">
    <property type="component" value="Chromosome XII"/>
</dbReference>
<dbReference type="RNAct" id="P12684">
    <property type="molecule type" value="protein"/>
</dbReference>
<dbReference type="GO" id="GO:0005783">
    <property type="term" value="C:endoplasmic reticulum"/>
    <property type="evidence" value="ECO:0000314"/>
    <property type="project" value="UniProt"/>
</dbReference>
<dbReference type="GO" id="GO:0005789">
    <property type="term" value="C:endoplasmic reticulum membrane"/>
    <property type="evidence" value="ECO:0000314"/>
    <property type="project" value="SGD"/>
</dbReference>
<dbReference type="GO" id="GO:0005635">
    <property type="term" value="C:nuclear envelope"/>
    <property type="evidence" value="ECO:0000314"/>
    <property type="project" value="SGD"/>
</dbReference>
<dbReference type="GO" id="GO:0034399">
    <property type="term" value="C:nuclear periphery"/>
    <property type="evidence" value="ECO:0007005"/>
    <property type="project" value="SGD"/>
</dbReference>
<dbReference type="GO" id="GO:0005778">
    <property type="term" value="C:peroxisomal membrane"/>
    <property type="evidence" value="ECO:0000318"/>
    <property type="project" value="GO_Central"/>
</dbReference>
<dbReference type="GO" id="GO:0000502">
    <property type="term" value="C:proteasome complex"/>
    <property type="evidence" value="ECO:0000353"/>
    <property type="project" value="SGD"/>
</dbReference>
<dbReference type="GO" id="GO:0004420">
    <property type="term" value="F:hydroxymethylglutaryl-CoA reductase (NADPH) activity"/>
    <property type="evidence" value="ECO:0000314"/>
    <property type="project" value="UniProt"/>
</dbReference>
<dbReference type="GO" id="GO:0015936">
    <property type="term" value="P:coenzyme A metabolic process"/>
    <property type="evidence" value="ECO:0007669"/>
    <property type="project" value="InterPro"/>
</dbReference>
<dbReference type="GO" id="GO:0006696">
    <property type="term" value="P:ergosterol biosynthetic process"/>
    <property type="evidence" value="ECO:0000314"/>
    <property type="project" value="UniProt"/>
</dbReference>
<dbReference type="GO" id="GO:0008299">
    <property type="term" value="P:isoprenoid biosynthetic process"/>
    <property type="evidence" value="ECO:0000318"/>
    <property type="project" value="GO_Central"/>
</dbReference>
<dbReference type="CDD" id="cd00643">
    <property type="entry name" value="HMG-CoA_reductase_classI"/>
    <property type="match status" value="1"/>
</dbReference>
<dbReference type="FunFam" id="1.10.3270.10:FF:000001">
    <property type="entry name" value="3-hydroxy-3-methylglutaryl coenzyme A reductase"/>
    <property type="match status" value="1"/>
</dbReference>
<dbReference type="FunFam" id="3.30.70.420:FF:000001">
    <property type="entry name" value="3-hydroxy-3-methylglutaryl coenzyme A reductase"/>
    <property type="match status" value="1"/>
</dbReference>
<dbReference type="FunFam" id="3.90.770.10:FF:000001">
    <property type="entry name" value="3-hydroxy-3-methylglutaryl coenzyme A reductase"/>
    <property type="match status" value="1"/>
</dbReference>
<dbReference type="Gene3D" id="3.90.770.10">
    <property type="entry name" value="3-hydroxy-3-methylglutaryl-coenzyme A Reductase, Chain A, domain 2"/>
    <property type="match status" value="1"/>
</dbReference>
<dbReference type="Gene3D" id="1.10.3270.10">
    <property type="entry name" value="HMGR, N-terminal domain"/>
    <property type="match status" value="1"/>
</dbReference>
<dbReference type="Gene3D" id="3.30.70.420">
    <property type="entry name" value="Hydroxymethylglutaryl-CoA reductase, class I/II, NAD/NADP-binding domain"/>
    <property type="match status" value="1"/>
</dbReference>
<dbReference type="InterPro" id="IPR025583">
    <property type="entry name" value="HMG-CoA_N_dom"/>
</dbReference>
<dbReference type="InterPro" id="IPR002202">
    <property type="entry name" value="HMG_CoA_Rdtase"/>
</dbReference>
<dbReference type="InterPro" id="IPR023074">
    <property type="entry name" value="HMG_CoA_Rdtase_cat_sf"/>
</dbReference>
<dbReference type="InterPro" id="IPR023076">
    <property type="entry name" value="HMG_CoA_Rdtase_CS"/>
</dbReference>
<dbReference type="InterPro" id="IPR004554">
    <property type="entry name" value="HMG_CoA_Rdtase_eu_arc"/>
</dbReference>
<dbReference type="InterPro" id="IPR023282">
    <property type="entry name" value="HMG_CoA_Rdtase_N"/>
</dbReference>
<dbReference type="InterPro" id="IPR009023">
    <property type="entry name" value="HMG_CoA_Rdtase_NAD(P)-bd_sf"/>
</dbReference>
<dbReference type="InterPro" id="IPR009029">
    <property type="entry name" value="HMG_CoA_Rdtase_sub-bd_dom_sf"/>
</dbReference>
<dbReference type="InterPro" id="IPR053958">
    <property type="entry name" value="HMGCR/SNAP/NPC1-like_SSD"/>
</dbReference>
<dbReference type="InterPro" id="IPR000731">
    <property type="entry name" value="SSD"/>
</dbReference>
<dbReference type="NCBIfam" id="TIGR00533">
    <property type="entry name" value="HMG_CoA_R_NADP"/>
    <property type="match status" value="1"/>
</dbReference>
<dbReference type="PANTHER" id="PTHR10572">
    <property type="entry name" value="3-HYDROXY-3-METHYLGLUTARYL-COENZYME A REDUCTASE"/>
    <property type="match status" value="1"/>
</dbReference>
<dbReference type="PANTHER" id="PTHR10572:SF24">
    <property type="entry name" value="3-HYDROXY-3-METHYLGLUTARYL-COENZYME A REDUCTASE"/>
    <property type="match status" value="1"/>
</dbReference>
<dbReference type="Pfam" id="PF00368">
    <property type="entry name" value="HMG-CoA_red"/>
    <property type="match status" value="1"/>
</dbReference>
<dbReference type="Pfam" id="PF13323">
    <property type="entry name" value="HPIH"/>
    <property type="match status" value="1"/>
</dbReference>
<dbReference type="Pfam" id="PF12349">
    <property type="entry name" value="Sterol-sensing"/>
    <property type="match status" value="1"/>
</dbReference>
<dbReference type="PRINTS" id="PR00071">
    <property type="entry name" value="HMGCOARDTASE"/>
</dbReference>
<dbReference type="SUPFAM" id="SSF55035">
    <property type="entry name" value="NAD-binding domain of HMG-CoA reductase"/>
    <property type="match status" value="1"/>
</dbReference>
<dbReference type="SUPFAM" id="SSF56542">
    <property type="entry name" value="Substrate-binding domain of HMG-CoA reductase"/>
    <property type="match status" value="1"/>
</dbReference>
<dbReference type="PROSITE" id="PS00066">
    <property type="entry name" value="HMG_COA_REDUCTASE_1"/>
    <property type="match status" value="1"/>
</dbReference>
<dbReference type="PROSITE" id="PS00318">
    <property type="entry name" value="HMG_COA_REDUCTASE_2"/>
    <property type="match status" value="1"/>
</dbReference>
<dbReference type="PROSITE" id="PS01192">
    <property type="entry name" value="HMG_COA_REDUCTASE_3"/>
    <property type="match status" value="1"/>
</dbReference>
<dbReference type="PROSITE" id="PS50065">
    <property type="entry name" value="HMG_COA_REDUCTASE_4"/>
    <property type="match status" value="1"/>
</dbReference>
<dbReference type="PROSITE" id="PS50156">
    <property type="entry name" value="SSD"/>
    <property type="match status" value="1"/>
</dbReference>
<keyword id="KW-0256">Endoplasmic reticulum</keyword>
<keyword id="KW-0325">Glycoprotein</keyword>
<keyword id="KW-0444">Lipid biosynthesis</keyword>
<keyword id="KW-0443">Lipid metabolism</keyword>
<keyword id="KW-0472">Membrane</keyword>
<keyword id="KW-0521">NADP</keyword>
<keyword id="KW-0539">Nucleus</keyword>
<keyword id="KW-0560">Oxidoreductase</keyword>
<keyword id="KW-0597">Phosphoprotein</keyword>
<keyword id="KW-1185">Reference proteome</keyword>
<keyword id="KW-0752">Steroid biosynthesis</keyword>
<keyword id="KW-0753">Steroid metabolism</keyword>
<keyword id="KW-0756">Sterol biosynthesis</keyword>
<keyword id="KW-1207">Sterol metabolism</keyword>
<keyword id="KW-0812">Transmembrane</keyword>
<keyword id="KW-1133">Transmembrane helix</keyword>